<gene>
    <name evidence="1" type="primary">kdpA</name>
    <name type="ordered locus">MRA_1037</name>
</gene>
<feature type="chain" id="PRO_1000022237" description="Potassium-transporting ATPase potassium-binding subunit">
    <location>
        <begin position="1"/>
        <end position="571"/>
    </location>
</feature>
<feature type="transmembrane region" description="Helical" evidence="1">
    <location>
        <begin position="7"/>
        <end position="27"/>
    </location>
</feature>
<feature type="transmembrane region" description="Helical" evidence="1">
    <location>
        <begin position="66"/>
        <end position="86"/>
    </location>
</feature>
<feature type="transmembrane region" description="Helical" evidence="1">
    <location>
        <begin position="137"/>
        <end position="157"/>
    </location>
</feature>
<feature type="transmembrane region" description="Helical" evidence="1">
    <location>
        <begin position="188"/>
        <end position="208"/>
    </location>
</feature>
<feature type="transmembrane region" description="Helical" evidence="1">
    <location>
        <begin position="255"/>
        <end position="275"/>
    </location>
</feature>
<feature type="transmembrane region" description="Helical" evidence="1">
    <location>
        <begin position="286"/>
        <end position="306"/>
    </location>
</feature>
<feature type="transmembrane region" description="Helical" evidence="1">
    <location>
        <begin position="390"/>
        <end position="410"/>
    </location>
</feature>
<feature type="transmembrane region" description="Helical" evidence="1">
    <location>
        <begin position="430"/>
        <end position="450"/>
    </location>
</feature>
<feature type="transmembrane region" description="Helical" evidence="1">
    <location>
        <begin position="497"/>
        <end position="517"/>
    </location>
</feature>
<feature type="transmembrane region" description="Helical" evidence="1">
    <location>
        <begin position="538"/>
        <end position="558"/>
    </location>
</feature>
<dbReference type="EMBL" id="CP000611">
    <property type="protein sequence ID" value="ABQ72773.1"/>
    <property type="molecule type" value="Genomic_DNA"/>
</dbReference>
<dbReference type="RefSeq" id="WP_003405318.1">
    <property type="nucleotide sequence ID" value="NZ_CP016972.1"/>
</dbReference>
<dbReference type="SMR" id="A5U173"/>
<dbReference type="KEGG" id="mra:MRA_1037"/>
<dbReference type="eggNOG" id="COG2060">
    <property type="taxonomic scope" value="Bacteria"/>
</dbReference>
<dbReference type="HOGENOM" id="CLU_018614_3_0_11"/>
<dbReference type="Proteomes" id="UP000001988">
    <property type="component" value="Chromosome"/>
</dbReference>
<dbReference type="GO" id="GO:0005886">
    <property type="term" value="C:plasma membrane"/>
    <property type="evidence" value="ECO:0007669"/>
    <property type="project" value="UniProtKB-SubCell"/>
</dbReference>
<dbReference type="GO" id="GO:0008556">
    <property type="term" value="F:P-type potassium transmembrane transporter activity"/>
    <property type="evidence" value="ECO:0007669"/>
    <property type="project" value="InterPro"/>
</dbReference>
<dbReference type="GO" id="GO:0030955">
    <property type="term" value="F:potassium ion binding"/>
    <property type="evidence" value="ECO:0007669"/>
    <property type="project" value="UniProtKB-UniRule"/>
</dbReference>
<dbReference type="HAMAP" id="MF_00275">
    <property type="entry name" value="KdpA"/>
    <property type="match status" value="1"/>
</dbReference>
<dbReference type="InterPro" id="IPR004623">
    <property type="entry name" value="KdpA"/>
</dbReference>
<dbReference type="NCBIfam" id="TIGR00680">
    <property type="entry name" value="kdpA"/>
    <property type="match status" value="1"/>
</dbReference>
<dbReference type="PANTHER" id="PTHR30607">
    <property type="entry name" value="POTASSIUM-TRANSPORTING ATPASE A CHAIN"/>
    <property type="match status" value="1"/>
</dbReference>
<dbReference type="PANTHER" id="PTHR30607:SF2">
    <property type="entry name" value="POTASSIUM-TRANSPORTING ATPASE POTASSIUM-BINDING SUBUNIT"/>
    <property type="match status" value="1"/>
</dbReference>
<dbReference type="Pfam" id="PF03814">
    <property type="entry name" value="KdpA"/>
    <property type="match status" value="1"/>
</dbReference>
<dbReference type="PIRSF" id="PIRSF001294">
    <property type="entry name" value="K_ATPaseA"/>
    <property type="match status" value="1"/>
</dbReference>
<comment type="function">
    <text evidence="1">Part of the high-affinity ATP-driven potassium transport (or Kdp) system, which catalyzes the hydrolysis of ATP coupled with the electrogenic transport of potassium into the cytoplasm. This subunit binds the extracellular potassium ions and delivers the ions to the membrane domain of KdpB through an intramembrane tunnel.</text>
</comment>
<comment type="subunit">
    <text evidence="1">The system is composed of three essential subunits: KdpA, KdpB and KdpC.</text>
</comment>
<comment type="subcellular location">
    <subcellularLocation>
        <location evidence="1">Cell membrane</location>
        <topology evidence="1">Multi-pass membrane protein</topology>
    </subcellularLocation>
</comment>
<comment type="similarity">
    <text evidence="1">Belongs to the KdpA family.</text>
</comment>
<sequence>MSGTSWLQFAALIAVLLLTAPALGGYLAKIYGDEAKKPGDRVFGPIERVIYQVCRVDPGSEQRWSTYALSVLAFSVMSFLLLYGIARFQGVLPFNPTDKPAVTDHVAFNAAVSFMTNTNWQSYSGEATMSHFTQMTGLAVQNFVSASAGMCVLAALIRGLARKRASTLGNFWVDLARTVLRIMFPLSFVVAILLVSQGVIQNLHGFIVANTLEGAPQLIPGGPVASQVAIKQLGTNGGGFFNVNSAHPFENYTPIGNFVENWAILIIPFALCFAFGKMVHDRRQGWAVLAIMGIIWIGMSVAAMSFEAKGNPRLDALGVTQQTTVDQSGGNLEGKEVRFGVGASGLWAASTTGTSNGSVNSMHDSYTPLGGMVPLAHMMLGEVSPGGTGVGLNGLLVMAILAVFIAGLMVGRTPEYLGKKIQATEMKLVTLYILAMPIALLSFAAASVLISSALASRNNPGPHGLSEILYAYTSGANNNGSAFAGLTASTWSYDTTIGVAMLIGRFFLIIPVLAIAGSLARKGTTPVTAATFPTHKPLFVGLVIGVVLIVGGLTFFPALALGPIVEQLSTQ</sequence>
<name>KDPA_MYCTA</name>
<protein>
    <recommendedName>
        <fullName evidence="1">Potassium-transporting ATPase potassium-binding subunit</fullName>
    </recommendedName>
    <alternativeName>
        <fullName evidence="1">ATP phosphohydrolase [potassium-transporting] A chain</fullName>
    </alternativeName>
    <alternativeName>
        <fullName evidence="1">Potassium-binding and translocating subunit A</fullName>
    </alternativeName>
    <alternativeName>
        <fullName evidence="1">Potassium-translocating ATPase A chain</fullName>
    </alternativeName>
</protein>
<reference key="1">
    <citation type="journal article" date="2008" name="PLoS ONE">
        <title>Genetic basis of virulence attenuation revealed by comparative genomic analysis of Mycobacterium tuberculosis strain H37Ra versus H37Rv.</title>
        <authorList>
            <person name="Zheng H."/>
            <person name="Lu L."/>
            <person name="Wang B."/>
            <person name="Pu S."/>
            <person name="Zhang X."/>
            <person name="Zhu G."/>
            <person name="Shi W."/>
            <person name="Zhang L."/>
            <person name="Wang H."/>
            <person name="Wang S."/>
            <person name="Zhao G."/>
            <person name="Zhang Y."/>
        </authorList>
    </citation>
    <scope>NUCLEOTIDE SEQUENCE [LARGE SCALE GENOMIC DNA]</scope>
    <source>
        <strain>ATCC 25177 / H37Ra</strain>
    </source>
</reference>
<evidence type="ECO:0000255" key="1">
    <source>
        <dbReference type="HAMAP-Rule" id="MF_00275"/>
    </source>
</evidence>
<proteinExistence type="inferred from homology"/>
<organism>
    <name type="scientific">Mycobacterium tuberculosis (strain ATCC 25177 / H37Ra)</name>
    <dbReference type="NCBI Taxonomy" id="419947"/>
    <lineage>
        <taxon>Bacteria</taxon>
        <taxon>Bacillati</taxon>
        <taxon>Actinomycetota</taxon>
        <taxon>Actinomycetes</taxon>
        <taxon>Mycobacteriales</taxon>
        <taxon>Mycobacteriaceae</taxon>
        <taxon>Mycobacterium</taxon>
        <taxon>Mycobacterium tuberculosis complex</taxon>
    </lineage>
</organism>
<keyword id="KW-1003">Cell membrane</keyword>
<keyword id="KW-0406">Ion transport</keyword>
<keyword id="KW-0472">Membrane</keyword>
<keyword id="KW-0630">Potassium</keyword>
<keyword id="KW-0633">Potassium transport</keyword>
<keyword id="KW-1185">Reference proteome</keyword>
<keyword id="KW-0812">Transmembrane</keyword>
<keyword id="KW-1133">Transmembrane helix</keyword>
<keyword id="KW-0813">Transport</keyword>
<accession>A5U173</accession>